<dbReference type="EC" id="2.7.4.3" evidence="1"/>
<dbReference type="EMBL" id="BX950229">
    <property type="protein sequence ID" value="CAF30587.1"/>
    <property type="molecule type" value="Genomic_DNA"/>
</dbReference>
<dbReference type="RefSeq" id="WP_011170975.1">
    <property type="nucleotide sequence ID" value="NC_005791.1"/>
</dbReference>
<dbReference type="PDB" id="3H86">
    <property type="method" value="X-ray"/>
    <property type="resolution" value="2.50 A"/>
    <property type="chains" value="A/B/C/G=1-192"/>
</dbReference>
<dbReference type="PDBsum" id="3H86"/>
<dbReference type="SMR" id="Q6LYG0"/>
<dbReference type="STRING" id="267377.MMP1031"/>
<dbReference type="EnsemblBacteria" id="CAF30587">
    <property type="protein sequence ID" value="CAF30587"/>
    <property type="gene ID" value="MMP1031"/>
</dbReference>
<dbReference type="KEGG" id="mmp:MMP1031"/>
<dbReference type="PATRIC" id="fig|267377.15.peg.1063"/>
<dbReference type="eggNOG" id="arCOG01039">
    <property type="taxonomic scope" value="Archaea"/>
</dbReference>
<dbReference type="HOGENOM" id="CLU_119371_0_0_2"/>
<dbReference type="OrthoDB" id="26198at2157"/>
<dbReference type="BRENDA" id="2.7.4.3">
    <property type="organism ID" value="3262"/>
</dbReference>
<dbReference type="EvolutionaryTrace" id="Q6LYG0"/>
<dbReference type="Proteomes" id="UP000000590">
    <property type="component" value="Chromosome"/>
</dbReference>
<dbReference type="GO" id="GO:0005737">
    <property type="term" value="C:cytoplasm"/>
    <property type="evidence" value="ECO:0007669"/>
    <property type="project" value="UniProtKB-SubCell"/>
</dbReference>
<dbReference type="GO" id="GO:0004017">
    <property type="term" value="F:adenylate kinase activity"/>
    <property type="evidence" value="ECO:0007669"/>
    <property type="project" value="UniProtKB-UniRule"/>
</dbReference>
<dbReference type="GO" id="GO:0005524">
    <property type="term" value="F:ATP binding"/>
    <property type="evidence" value="ECO:0007669"/>
    <property type="project" value="UniProtKB-UniRule"/>
</dbReference>
<dbReference type="Gene3D" id="3.40.50.300">
    <property type="entry name" value="P-loop containing nucleotide triphosphate hydrolases"/>
    <property type="match status" value="1"/>
</dbReference>
<dbReference type="HAMAP" id="MF_00234">
    <property type="entry name" value="Adenylate_kinase_AdkA"/>
    <property type="match status" value="1"/>
</dbReference>
<dbReference type="InterPro" id="IPR023477">
    <property type="entry name" value="Adenylate_kinase_AdkA"/>
</dbReference>
<dbReference type="InterPro" id="IPR027417">
    <property type="entry name" value="P-loop_NTPase"/>
</dbReference>
<dbReference type="NCBIfam" id="NF003122">
    <property type="entry name" value="PRK04040.1"/>
    <property type="match status" value="1"/>
</dbReference>
<dbReference type="Pfam" id="PF13207">
    <property type="entry name" value="AAA_17"/>
    <property type="match status" value="1"/>
</dbReference>
<dbReference type="SUPFAM" id="SSF52540">
    <property type="entry name" value="P-loop containing nucleoside triphosphate hydrolases"/>
    <property type="match status" value="1"/>
</dbReference>
<gene>
    <name evidence="1" type="primary">adkA</name>
    <name type="ordered locus">MMP1031</name>
</gene>
<reference key="1">
    <citation type="journal article" date="2004" name="J. Bacteriol.">
        <title>Complete genome sequence of the genetically tractable hydrogenotrophic methanogen Methanococcus maripaludis.</title>
        <authorList>
            <person name="Hendrickson E.L."/>
            <person name="Kaul R."/>
            <person name="Zhou Y."/>
            <person name="Bovee D."/>
            <person name="Chapman P."/>
            <person name="Chung J."/>
            <person name="Conway de Macario E."/>
            <person name="Dodsworth J.A."/>
            <person name="Gillett W."/>
            <person name="Graham D.E."/>
            <person name="Hackett M."/>
            <person name="Haydock A.K."/>
            <person name="Kang A."/>
            <person name="Land M.L."/>
            <person name="Levy R."/>
            <person name="Lie T.J."/>
            <person name="Major T.A."/>
            <person name="Moore B.C."/>
            <person name="Porat I."/>
            <person name="Palmeiri A."/>
            <person name="Rouse G."/>
            <person name="Saenphimmachak C."/>
            <person name="Soell D."/>
            <person name="Van Dien S."/>
            <person name="Wang T."/>
            <person name="Whitman W.B."/>
            <person name="Xia Q."/>
            <person name="Zhang Y."/>
            <person name="Larimer F.W."/>
            <person name="Olson M.V."/>
            <person name="Leigh J.A."/>
        </authorList>
    </citation>
    <scope>NUCLEOTIDE SEQUENCE [LARGE SCALE GENOMIC DNA]</scope>
    <source>
        <strain>DSM 14266 / JCM 13030 / NBRC 101832 / S2 / LL</strain>
    </source>
</reference>
<proteinExistence type="evidence at protein level"/>
<accession>Q6LYG0</accession>
<comment type="catalytic activity">
    <reaction evidence="1">
        <text>AMP + ATP = 2 ADP</text>
        <dbReference type="Rhea" id="RHEA:12973"/>
        <dbReference type="ChEBI" id="CHEBI:30616"/>
        <dbReference type="ChEBI" id="CHEBI:456215"/>
        <dbReference type="ChEBI" id="CHEBI:456216"/>
        <dbReference type="EC" id="2.7.4.3"/>
    </reaction>
</comment>
<comment type="subunit">
    <text evidence="1">Monomer.</text>
</comment>
<comment type="subcellular location">
    <subcellularLocation>
        <location evidence="1">Cytoplasm</location>
    </subcellularLocation>
</comment>
<comment type="similarity">
    <text evidence="1">Belongs to the archaeal adenylate kinase family.</text>
</comment>
<organism>
    <name type="scientific">Methanococcus maripaludis (strain DSM 14266 / JCM 13030 / NBRC 101832 / S2 / LL)</name>
    <dbReference type="NCBI Taxonomy" id="267377"/>
    <lineage>
        <taxon>Archaea</taxon>
        <taxon>Methanobacteriati</taxon>
        <taxon>Methanobacteriota</taxon>
        <taxon>Methanomada group</taxon>
        <taxon>Methanococci</taxon>
        <taxon>Methanococcales</taxon>
        <taxon>Methanococcaceae</taxon>
        <taxon>Methanococcus</taxon>
    </lineage>
</organism>
<sequence>MKNKVVVVTGVPGVGGTTVTQKAMDILSEEGLNYKMVNFGSAMFDVANEEGLASDRDQMRRLDPETQKRIQKMAGRKIAEMAKESPVAVDTHSTVKTPKGYLPGLPAWVLTELNPDIVIVVETDGDEILMRRLSDESRKRDLETTASIEEHQFMNRAAAMSYGVLTGATVKIVKNKNGLVDNAVEELMSVLR</sequence>
<feature type="chain" id="PRO_0000131816" description="Adenylate kinase">
    <location>
        <begin position="1"/>
        <end position="192"/>
    </location>
</feature>
<feature type="binding site" evidence="1">
    <location>
        <begin position="10"/>
        <end position="18"/>
    </location>
    <ligand>
        <name>ATP</name>
        <dbReference type="ChEBI" id="CHEBI:30616"/>
    </ligand>
</feature>
<feature type="strand" evidence="2">
    <location>
        <begin position="4"/>
        <end position="9"/>
    </location>
</feature>
<feature type="helix" evidence="2">
    <location>
        <begin position="16"/>
        <end position="28"/>
    </location>
</feature>
<feature type="turn" evidence="2">
    <location>
        <begin position="29"/>
        <end position="31"/>
    </location>
</feature>
<feature type="strand" evidence="2">
    <location>
        <begin position="36"/>
        <end position="38"/>
    </location>
</feature>
<feature type="helix" evidence="2">
    <location>
        <begin position="39"/>
        <end position="42"/>
    </location>
</feature>
<feature type="helix" evidence="2">
    <location>
        <begin position="44"/>
        <end position="48"/>
    </location>
</feature>
<feature type="turn" evidence="2">
    <location>
        <begin position="49"/>
        <end position="51"/>
    </location>
</feature>
<feature type="strand" evidence="2">
    <location>
        <begin position="54"/>
        <end position="57"/>
    </location>
</feature>
<feature type="strand" evidence="2">
    <location>
        <begin position="60"/>
        <end position="62"/>
    </location>
</feature>
<feature type="helix" evidence="2">
    <location>
        <begin position="67"/>
        <end position="83"/>
    </location>
</feature>
<feature type="strand" evidence="2">
    <location>
        <begin position="87"/>
        <end position="90"/>
    </location>
</feature>
<feature type="strand" evidence="2">
    <location>
        <begin position="93"/>
        <end position="97"/>
    </location>
</feature>
<feature type="strand" evidence="2">
    <location>
        <begin position="100"/>
        <end position="105"/>
    </location>
</feature>
<feature type="helix" evidence="2">
    <location>
        <begin position="107"/>
        <end position="111"/>
    </location>
</feature>
<feature type="strand" evidence="2">
    <location>
        <begin position="116"/>
        <end position="122"/>
    </location>
</feature>
<feature type="helix" evidence="2">
    <location>
        <begin position="125"/>
        <end position="134"/>
    </location>
</feature>
<feature type="turn" evidence="2">
    <location>
        <begin position="136"/>
        <end position="139"/>
    </location>
</feature>
<feature type="helix" evidence="2">
    <location>
        <begin position="145"/>
        <end position="166"/>
    </location>
</feature>
<feature type="strand" evidence="2">
    <location>
        <begin position="169"/>
        <end position="174"/>
    </location>
</feature>
<feature type="helix" evidence="2">
    <location>
        <begin position="180"/>
        <end position="191"/>
    </location>
</feature>
<keyword id="KW-0002">3D-structure</keyword>
<keyword id="KW-0067">ATP-binding</keyword>
<keyword id="KW-0963">Cytoplasm</keyword>
<keyword id="KW-0418">Kinase</keyword>
<keyword id="KW-0547">Nucleotide-binding</keyword>
<keyword id="KW-1185">Reference proteome</keyword>
<keyword id="KW-0808">Transferase</keyword>
<protein>
    <recommendedName>
        <fullName evidence="1">Adenylate kinase</fullName>
        <shortName evidence="1">AK</shortName>
        <ecNumber evidence="1">2.7.4.3</ecNumber>
    </recommendedName>
    <alternativeName>
        <fullName evidence="1">ATP-AMP transphosphorylase</fullName>
    </alternativeName>
</protein>
<evidence type="ECO:0000255" key="1">
    <source>
        <dbReference type="HAMAP-Rule" id="MF_00234"/>
    </source>
</evidence>
<evidence type="ECO:0007829" key="2">
    <source>
        <dbReference type="PDB" id="3H86"/>
    </source>
</evidence>
<name>KADA_METMP</name>